<feature type="chain" id="PRO_0000245587" description="E3 ubiquitin-protein ligase ARK2C">
    <location>
        <begin position="1"/>
        <end position="346"/>
    </location>
</feature>
<feature type="zinc finger region" description="RING-type; atypical" evidence="2">
    <location>
        <begin position="294"/>
        <end position="335"/>
    </location>
</feature>
<feature type="region of interest" description="Disordered" evidence="3">
    <location>
        <begin position="23"/>
        <end position="76"/>
    </location>
</feature>
<feature type="region of interest" description="Ubiquitin binding" evidence="4 9">
    <location>
        <begin position="266"/>
        <end position="268"/>
    </location>
</feature>
<feature type="region of interest" description="Disordered" evidence="3">
    <location>
        <begin position="267"/>
        <end position="288"/>
    </location>
</feature>
<feature type="region of interest" description="Ubiquitin binding" evidence="4 9">
    <location>
        <begin position="309"/>
        <end position="313"/>
    </location>
</feature>
<feature type="compositionally biased region" description="Basic and acidic residues" evidence="3">
    <location>
        <begin position="275"/>
        <end position="284"/>
    </location>
</feature>
<feature type="binding site" evidence="4 8 9 10">
    <location>
        <position position="294"/>
    </location>
    <ligand>
        <name>Zn(2+)</name>
        <dbReference type="ChEBI" id="CHEBI:29105"/>
    </ligand>
</feature>
<feature type="binding site" evidence="4 8 9 10">
    <location>
        <position position="297"/>
    </location>
    <ligand>
        <name>Zn(2+)</name>
        <dbReference type="ChEBI" id="CHEBI:29105"/>
    </ligand>
</feature>
<feature type="binding site" evidence="4 8 9 10">
    <location>
        <position position="317"/>
    </location>
    <ligand>
        <name>Zn(2+)</name>
        <dbReference type="ChEBI" id="CHEBI:29105"/>
    </ligand>
</feature>
<feature type="binding site" evidence="4 8 9 10">
    <location>
        <position position="320"/>
    </location>
    <ligand>
        <name>Zn(2+)</name>
        <dbReference type="ChEBI" id="CHEBI:29105"/>
    </ligand>
</feature>
<feature type="splice variant" id="VSP_045128" description="In isoform 2." evidence="5">
    <location>
        <begin position="1"/>
        <end position="192"/>
    </location>
</feature>
<feature type="mutagenesis site" description="Reduced binding to free ubiquitin." evidence="4">
    <original>R</original>
    <variation>A</variation>
    <location>
        <position position="309"/>
    </location>
</feature>
<feature type="mutagenesis site" description="Reduced binding to free ubiquitin and reduced E3 ubiquitin-protein ligase activity." evidence="4">
    <original>M</original>
    <variation>A</variation>
    <location>
        <position position="313"/>
    </location>
</feature>
<feature type="mutagenesis site" description="Reduced ubiquitin discharge." evidence="4">
    <original>R</original>
    <variation>A</variation>
    <location>
        <position position="335"/>
    </location>
</feature>
<feature type="helix" evidence="11">
    <location>
        <begin position="261"/>
        <end position="264"/>
    </location>
</feature>
<feature type="strand" evidence="11">
    <location>
        <begin position="265"/>
        <end position="269"/>
    </location>
</feature>
<feature type="turn" evidence="11">
    <location>
        <begin position="295"/>
        <end position="297"/>
    </location>
</feature>
<feature type="strand" evidence="12">
    <location>
        <begin position="299"/>
        <end position="305"/>
    </location>
</feature>
<feature type="strand" evidence="11">
    <location>
        <begin position="306"/>
        <end position="309"/>
    </location>
</feature>
<feature type="strand" evidence="11">
    <location>
        <begin position="315"/>
        <end position="317"/>
    </location>
</feature>
<feature type="helix" evidence="11">
    <location>
        <begin position="318"/>
        <end position="328"/>
    </location>
</feature>
<feature type="turn" evidence="11">
    <location>
        <begin position="332"/>
        <end position="334"/>
    </location>
</feature>
<gene>
    <name evidence="7" type="primary">ARK2C</name>
    <name type="synonym">RNF165</name>
</gene>
<proteinExistence type="evidence at protein level"/>
<reference key="1">
    <citation type="journal article" date="2004" name="Nat. Genet.">
        <title>Complete sequencing and characterization of 21,243 full-length human cDNAs.</title>
        <authorList>
            <person name="Ota T."/>
            <person name="Suzuki Y."/>
            <person name="Nishikawa T."/>
            <person name="Otsuki T."/>
            <person name="Sugiyama T."/>
            <person name="Irie R."/>
            <person name="Wakamatsu A."/>
            <person name="Hayashi K."/>
            <person name="Sato H."/>
            <person name="Nagai K."/>
            <person name="Kimura K."/>
            <person name="Makita H."/>
            <person name="Sekine M."/>
            <person name="Obayashi M."/>
            <person name="Nishi T."/>
            <person name="Shibahara T."/>
            <person name="Tanaka T."/>
            <person name="Ishii S."/>
            <person name="Yamamoto J."/>
            <person name="Saito K."/>
            <person name="Kawai Y."/>
            <person name="Isono Y."/>
            <person name="Nakamura Y."/>
            <person name="Nagahari K."/>
            <person name="Murakami K."/>
            <person name="Yasuda T."/>
            <person name="Iwayanagi T."/>
            <person name="Wagatsuma M."/>
            <person name="Shiratori A."/>
            <person name="Sudo H."/>
            <person name="Hosoiri T."/>
            <person name="Kaku Y."/>
            <person name="Kodaira H."/>
            <person name="Kondo H."/>
            <person name="Sugawara M."/>
            <person name="Takahashi M."/>
            <person name="Kanda K."/>
            <person name="Yokoi T."/>
            <person name="Furuya T."/>
            <person name="Kikkawa E."/>
            <person name="Omura Y."/>
            <person name="Abe K."/>
            <person name="Kamihara K."/>
            <person name="Katsuta N."/>
            <person name="Sato K."/>
            <person name="Tanikawa M."/>
            <person name="Yamazaki M."/>
            <person name="Ninomiya K."/>
            <person name="Ishibashi T."/>
            <person name="Yamashita H."/>
            <person name="Murakawa K."/>
            <person name="Fujimori K."/>
            <person name="Tanai H."/>
            <person name="Kimata M."/>
            <person name="Watanabe M."/>
            <person name="Hiraoka S."/>
            <person name="Chiba Y."/>
            <person name="Ishida S."/>
            <person name="Ono Y."/>
            <person name="Takiguchi S."/>
            <person name="Watanabe S."/>
            <person name="Yosida M."/>
            <person name="Hotuta T."/>
            <person name="Kusano J."/>
            <person name="Kanehori K."/>
            <person name="Takahashi-Fujii A."/>
            <person name="Hara H."/>
            <person name="Tanase T.-O."/>
            <person name="Nomura Y."/>
            <person name="Togiya S."/>
            <person name="Komai F."/>
            <person name="Hara R."/>
            <person name="Takeuchi K."/>
            <person name="Arita M."/>
            <person name="Imose N."/>
            <person name="Musashino K."/>
            <person name="Yuuki H."/>
            <person name="Oshima A."/>
            <person name="Sasaki N."/>
            <person name="Aotsuka S."/>
            <person name="Yoshikawa Y."/>
            <person name="Matsunawa H."/>
            <person name="Ichihara T."/>
            <person name="Shiohata N."/>
            <person name="Sano S."/>
            <person name="Moriya S."/>
            <person name="Momiyama H."/>
            <person name="Satoh N."/>
            <person name="Takami S."/>
            <person name="Terashima Y."/>
            <person name="Suzuki O."/>
            <person name="Nakagawa S."/>
            <person name="Senoh A."/>
            <person name="Mizoguchi H."/>
            <person name="Goto Y."/>
            <person name="Shimizu F."/>
            <person name="Wakebe H."/>
            <person name="Hishigaki H."/>
            <person name="Watanabe T."/>
            <person name="Sugiyama A."/>
            <person name="Takemoto M."/>
            <person name="Kawakami B."/>
            <person name="Yamazaki M."/>
            <person name="Watanabe K."/>
            <person name="Kumagai A."/>
            <person name="Itakura S."/>
            <person name="Fukuzumi Y."/>
            <person name="Fujimori Y."/>
            <person name="Komiyama M."/>
            <person name="Tashiro H."/>
            <person name="Tanigami A."/>
            <person name="Fujiwara T."/>
            <person name="Ono T."/>
            <person name="Yamada K."/>
            <person name="Fujii Y."/>
            <person name="Ozaki K."/>
            <person name="Hirao M."/>
            <person name="Ohmori Y."/>
            <person name="Kawabata A."/>
            <person name="Hikiji T."/>
            <person name="Kobatake N."/>
            <person name="Inagaki H."/>
            <person name="Ikema Y."/>
            <person name="Okamoto S."/>
            <person name="Okitani R."/>
            <person name="Kawakami T."/>
            <person name="Noguchi S."/>
            <person name="Itoh T."/>
            <person name="Shigeta K."/>
            <person name="Senba T."/>
            <person name="Matsumura K."/>
            <person name="Nakajima Y."/>
            <person name="Mizuno T."/>
            <person name="Morinaga M."/>
            <person name="Sasaki M."/>
            <person name="Togashi T."/>
            <person name="Oyama M."/>
            <person name="Hata H."/>
            <person name="Watanabe M."/>
            <person name="Komatsu T."/>
            <person name="Mizushima-Sugano J."/>
            <person name="Satoh T."/>
            <person name="Shirai Y."/>
            <person name="Takahashi Y."/>
            <person name="Nakagawa K."/>
            <person name="Okumura K."/>
            <person name="Nagase T."/>
            <person name="Nomura N."/>
            <person name="Kikuchi H."/>
            <person name="Masuho Y."/>
            <person name="Yamashita R."/>
            <person name="Nakai K."/>
            <person name="Yada T."/>
            <person name="Nakamura Y."/>
            <person name="Ohara O."/>
            <person name="Isogai T."/>
            <person name="Sugano S."/>
        </authorList>
    </citation>
    <scope>NUCLEOTIDE SEQUENCE [LARGE SCALE MRNA] (ISOFORMS 1 AND 2)</scope>
    <source>
        <tissue>Cerebellum</tissue>
        <tissue>Thalamus</tissue>
    </source>
</reference>
<reference key="2">
    <citation type="journal article" date="2005" name="Nature">
        <title>DNA sequence and analysis of human chromosome 18.</title>
        <authorList>
            <person name="Nusbaum C."/>
            <person name="Zody M.C."/>
            <person name="Borowsky M.L."/>
            <person name="Kamal M."/>
            <person name="Kodira C.D."/>
            <person name="Taylor T.D."/>
            <person name="Whittaker C.A."/>
            <person name="Chang J.L."/>
            <person name="Cuomo C.A."/>
            <person name="Dewar K."/>
            <person name="FitzGerald M.G."/>
            <person name="Yang X."/>
            <person name="Abouelleil A."/>
            <person name="Allen N.R."/>
            <person name="Anderson S."/>
            <person name="Bloom T."/>
            <person name="Bugalter B."/>
            <person name="Butler J."/>
            <person name="Cook A."/>
            <person name="DeCaprio D."/>
            <person name="Engels R."/>
            <person name="Garber M."/>
            <person name="Gnirke A."/>
            <person name="Hafez N."/>
            <person name="Hall J.L."/>
            <person name="Norman C.H."/>
            <person name="Itoh T."/>
            <person name="Jaffe D.B."/>
            <person name="Kuroki Y."/>
            <person name="Lehoczky J."/>
            <person name="Lui A."/>
            <person name="Macdonald P."/>
            <person name="Mauceli E."/>
            <person name="Mikkelsen T.S."/>
            <person name="Naylor J.W."/>
            <person name="Nicol R."/>
            <person name="Nguyen C."/>
            <person name="Noguchi H."/>
            <person name="O'Leary S.B."/>
            <person name="Piqani B."/>
            <person name="Smith C.L."/>
            <person name="Talamas J.A."/>
            <person name="Topham K."/>
            <person name="Totoki Y."/>
            <person name="Toyoda A."/>
            <person name="Wain H.M."/>
            <person name="Young S.K."/>
            <person name="Zeng Q."/>
            <person name="Zimmer A.R."/>
            <person name="Fujiyama A."/>
            <person name="Hattori M."/>
            <person name="Birren B.W."/>
            <person name="Sakaki Y."/>
            <person name="Lander E.S."/>
        </authorList>
    </citation>
    <scope>NUCLEOTIDE SEQUENCE [LARGE SCALE GENOMIC DNA]</scope>
</reference>
<reference evidence="8 9 10" key="3">
    <citation type="journal article" date="2016" name="Nat. Struct. Mol. Biol.">
        <title>Secondary ubiquitin-RING docking enhances Arkadia and Ark2C E3 ligase activity.</title>
        <authorList>
            <person name="Wright J.D."/>
            <person name="Mace P.D."/>
            <person name="Day C.L."/>
        </authorList>
    </citation>
    <scope>X-RAY CRYSTALLOGRAPHY (1.90 ANGSTROMS) OF 255-346 IN COMPLEX WITH ZINC; UBIQUITIN AND UBE2D2</scope>
    <scope>CATALYTIC ACTIVITY</scope>
    <scope>SUBUNIT</scope>
    <scope>ACTIVITY REGULATION</scope>
    <scope>DOMAIN</scope>
    <scope>MUTAGENESIS OF ARG-309; MET-313 AND ARG-335</scope>
</reference>
<organism>
    <name type="scientific">Homo sapiens</name>
    <name type="common">Human</name>
    <dbReference type="NCBI Taxonomy" id="9606"/>
    <lineage>
        <taxon>Eukaryota</taxon>
        <taxon>Metazoa</taxon>
        <taxon>Chordata</taxon>
        <taxon>Craniata</taxon>
        <taxon>Vertebrata</taxon>
        <taxon>Euteleostomi</taxon>
        <taxon>Mammalia</taxon>
        <taxon>Eutheria</taxon>
        <taxon>Euarchontoglires</taxon>
        <taxon>Primates</taxon>
        <taxon>Haplorrhini</taxon>
        <taxon>Catarrhini</taxon>
        <taxon>Hominidae</taxon>
        <taxon>Homo</taxon>
    </lineage>
</organism>
<sequence>MVLVHVGYLVLPVFGSVRNRGAPFQRSQHPHATSCRHFHLGPPQPQQLAPDFPLAHPVQSQPGLSAHMAPAHQHSGALHQSLTPLPTLQFQDVTGPSFLPQALHQQYLLQQQLLEAQHRRLVSHPRRSQERVSVHPHRLHPSFDFGQLQTPQPRYLAEGTDWDLSVDAGLSPAQFQVRPIPQHYQHYLATPRMHHFPRNSSSTQMVVHEIRNYPYPQLHFLALQGLNPSRHTSAVRESYEELLQLEDRLGNVTRGAVQNTIERFTFPHKYKKRRPQDGKGKKDEGEESDTDEKCTICLSMLEDGEDVRRLPCMHLFHQLCVDQWLAMSKKCPICRVDIETQLGADS</sequence>
<comment type="function">
    <text evidence="1">E3 ubiquitin-protein ligase that acts as a regulator of motor axon elongation. Required for efficient motor axon extension in the dorsal forelimb by enhancing the transcriptional responses of the SMAD1/SMAD5/SMAD8 effectors, which are activated downstream of BMP. Acts by mediating ubiquitination and degradation of SMAD inhibitors such as SMAD6, SMAD7, SKI and SNON isoform of SKIL.</text>
</comment>
<comment type="catalytic activity">
    <reaction evidence="4">
        <text>S-ubiquitinyl-[E2 ubiquitin-conjugating enzyme]-L-cysteine + [acceptor protein]-L-lysine = [E2 ubiquitin-conjugating enzyme]-L-cysteine + N(6)-ubiquitinyl-[acceptor protein]-L-lysine.</text>
        <dbReference type="EC" id="2.3.2.27"/>
    </reaction>
</comment>
<comment type="activity regulation">
    <text>Binds free ubiquitin non-covalently via its RING-type zinc finger. Ubiquitin-binding leads to enhance the E3 ubiquitin-protein ligase activity by stabilizing the ubiquitin-conjugating enzyme E2 (donor ubiquitin) in the 'closed' conformation and activating ubiquitin transfer (PubMed:26656854).</text>
</comment>
<comment type="subunit">
    <text evidence="4">Monomer; binding to the ubiquitin-conjugating enzyme E2 does not trigger homodimerization (PubMed:26656854).</text>
</comment>
<comment type="interaction">
    <interactant intactId="EBI-2129206">
        <id>Q6ZSG1</id>
    </interactant>
    <interactant intactId="EBI-347281">
        <id>P12755</id>
        <label>SKI</label>
    </interactant>
    <organismsDiffer>false</organismsDiffer>
    <experiments>2</experiments>
</comment>
<comment type="subcellular location">
    <subcellularLocation>
        <location evidence="1">Nucleus</location>
    </subcellularLocation>
</comment>
<comment type="alternative products">
    <event type="alternative splicing"/>
    <isoform>
        <id>Q6ZSG1-1</id>
        <name>1</name>
        <sequence type="displayed"/>
    </isoform>
    <isoform>
        <id>Q6ZSG1-2</id>
        <name>2</name>
        <sequence type="described" ref="VSP_045128"/>
    </isoform>
</comment>
<comment type="domain">
    <text evidence="4">The RING-type zinc finger mediates the E3 ubiquitin-protein ligase activity and binds directly to free ubiquitin (PubMed:26656854). Non-covalent ubiquitin-binding stabilizes the ubiquitin-conjugating enzyme E2 (donor ubiquitin) in the 'closed' conformation and stimulates ubiquitin transfer (PubMed:26656854).</text>
</comment>
<comment type="similarity">
    <text evidence="6">Belongs to the Arkadia family.</text>
</comment>
<evidence type="ECO:0000250" key="1">
    <source>
        <dbReference type="UniProtKB" id="E9QAU8"/>
    </source>
</evidence>
<evidence type="ECO:0000255" key="2">
    <source>
        <dbReference type="PROSITE-ProRule" id="PRU00175"/>
    </source>
</evidence>
<evidence type="ECO:0000256" key="3">
    <source>
        <dbReference type="SAM" id="MobiDB-lite"/>
    </source>
</evidence>
<evidence type="ECO:0000269" key="4">
    <source>
    </source>
</evidence>
<evidence type="ECO:0000303" key="5">
    <source>
    </source>
</evidence>
<evidence type="ECO:0000305" key="6"/>
<evidence type="ECO:0000312" key="7">
    <source>
        <dbReference type="HGNC" id="HGNC:31696"/>
    </source>
</evidence>
<evidence type="ECO:0007744" key="8">
    <source>
        <dbReference type="PDB" id="5D0I"/>
    </source>
</evidence>
<evidence type="ECO:0007744" key="9">
    <source>
        <dbReference type="PDB" id="5D0K"/>
    </source>
</evidence>
<evidence type="ECO:0007744" key="10">
    <source>
        <dbReference type="PDB" id="5D0M"/>
    </source>
</evidence>
<evidence type="ECO:0007829" key="11">
    <source>
        <dbReference type="PDB" id="5D0I"/>
    </source>
</evidence>
<evidence type="ECO:0007829" key="12">
    <source>
        <dbReference type="PDB" id="5ULH"/>
    </source>
</evidence>
<keyword id="KW-0002">3D-structure</keyword>
<keyword id="KW-0025">Alternative splicing</keyword>
<keyword id="KW-0479">Metal-binding</keyword>
<keyword id="KW-0539">Nucleus</keyword>
<keyword id="KW-1267">Proteomics identification</keyword>
<keyword id="KW-1185">Reference proteome</keyword>
<keyword id="KW-0808">Transferase</keyword>
<keyword id="KW-0833">Ubl conjugation pathway</keyword>
<keyword id="KW-0862">Zinc</keyword>
<keyword id="KW-0863">Zinc-finger</keyword>
<dbReference type="EC" id="2.3.2.27" evidence="4"/>
<dbReference type="EMBL" id="AK127467">
    <property type="protein sequence ID" value="BAC86992.1"/>
    <property type="molecule type" value="mRNA"/>
</dbReference>
<dbReference type="EMBL" id="AK122819">
    <property type="protein sequence ID" value="BAG53743.1"/>
    <property type="molecule type" value="mRNA"/>
</dbReference>
<dbReference type="EMBL" id="AC015959">
    <property type="status" value="NOT_ANNOTATED_CDS"/>
    <property type="molecule type" value="Genomic_DNA"/>
</dbReference>
<dbReference type="EMBL" id="AC018931">
    <property type="status" value="NOT_ANNOTATED_CDS"/>
    <property type="molecule type" value="Genomic_DNA"/>
</dbReference>
<dbReference type="EMBL" id="AC021763">
    <property type="status" value="NOT_ANNOTATED_CDS"/>
    <property type="molecule type" value="Genomic_DNA"/>
</dbReference>
<dbReference type="CCDS" id="CCDS32823.1">
    <molecule id="Q6ZSG1-1"/>
</dbReference>
<dbReference type="CCDS" id="CCDS58621.1">
    <molecule id="Q6ZSG1-2"/>
</dbReference>
<dbReference type="RefSeq" id="NP_001243687.1">
    <molecule id="Q6ZSG1-2"/>
    <property type="nucleotide sequence ID" value="NM_001256758.1"/>
</dbReference>
<dbReference type="RefSeq" id="NP_689683.2">
    <molecule id="Q6ZSG1-1"/>
    <property type="nucleotide sequence ID" value="NM_152470.3"/>
</dbReference>
<dbReference type="RefSeq" id="XP_024306959.1">
    <molecule id="Q6ZSG1-2"/>
    <property type="nucleotide sequence ID" value="XM_024451191.2"/>
</dbReference>
<dbReference type="RefSeq" id="XP_054174650.1">
    <molecule id="Q6ZSG1-2"/>
    <property type="nucleotide sequence ID" value="XM_054318675.1"/>
</dbReference>
<dbReference type="PDB" id="5D0I">
    <property type="method" value="X-ray"/>
    <property type="resolution" value="1.90 A"/>
    <property type="chains" value="A/B=255-346"/>
</dbReference>
<dbReference type="PDB" id="5D0K">
    <property type="method" value="X-ray"/>
    <property type="resolution" value="2.65 A"/>
    <property type="chains" value="C/F/I/L=255-346"/>
</dbReference>
<dbReference type="PDB" id="5D0M">
    <property type="method" value="X-ray"/>
    <property type="resolution" value="1.91 A"/>
    <property type="chains" value="C=255-346"/>
</dbReference>
<dbReference type="PDB" id="5ULH">
    <property type="method" value="X-ray"/>
    <property type="resolution" value="1.95 A"/>
    <property type="chains" value="C=255-346"/>
</dbReference>
<dbReference type="PDB" id="5ULK">
    <property type="method" value="X-ray"/>
    <property type="resolution" value="2.38 A"/>
    <property type="chains" value="C=255-346"/>
</dbReference>
<dbReference type="PDB" id="7R70">
    <property type="method" value="X-ray"/>
    <property type="resolution" value="2.50 A"/>
    <property type="chains" value="A/B=255-346"/>
</dbReference>
<dbReference type="PDB" id="7R71">
    <property type="method" value="X-ray"/>
    <property type="resolution" value="2.80 A"/>
    <property type="chains" value="A=255-346"/>
</dbReference>
<dbReference type="PDBsum" id="5D0I"/>
<dbReference type="PDBsum" id="5D0K"/>
<dbReference type="PDBsum" id="5D0M"/>
<dbReference type="PDBsum" id="5ULH"/>
<dbReference type="PDBsum" id="5ULK"/>
<dbReference type="PDBsum" id="7R70"/>
<dbReference type="PDBsum" id="7R71"/>
<dbReference type="SMR" id="Q6ZSG1"/>
<dbReference type="BioGRID" id="138966">
    <property type="interactions" value="12"/>
</dbReference>
<dbReference type="DIP" id="DIP-52693N"/>
<dbReference type="FunCoup" id="Q6ZSG1">
    <property type="interactions" value="1130"/>
</dbReference>
<dbReference type="IntAct" id="Q6ZSG1">
    <property type="interactions" value="12"/>
</dbReference>
<dbReference type="STRING" id="9606.ENSP00000269439"/>
<dbReference type="BioMuta" id="RNF165"/>
<dbReference type="DMDM" id="74762404"/>
<dbReference type="PaxDb" id="9606-ENSP00000269439"/>
<dbReference type="PeptideAtlas" id="Q6ZSG1"/>
<dbReference type="Antibodypedia" id="9062">
    <property type="antibodies" value="128 antibodies from 16 providers"/>
</dbReference>
<dbReference type="DNASU" id="494470"/>
<dbReference type="Ensembl" id="ENST00000269439.12">
    <molecule id="Q6ZSG1-1"/>
    <property type="protein sequence ID" value="ENSP00000269439.6"/>
    <property type="gene ID" value="ENSG00000141622.14"/>
</dbReference>
<dbReference type="Ensembl" id="ENST00000543885.2">
    <molecule id="Q6ZSG1-2"/>
    <property type="protein sequence ID" value="ENSP00000444285.1"/>
    <property type="gene ID" value="ENSG00000141622.14"/>
</dbReference>
<dbReference type="GeneID" id="494470"/>
<dbReference type="KEGG" id="hsa:494470"/>
<dbReference type="MANE-Select" id="ENST00000269439.12">
    <property type="protein sequence ID" value="ENSP00000269439.6"/>
    <property type="RefSeq nucleotide sequence ID" value="NM_152470.3"/>
    <property type="RefSeq protein sequence ID" value="NP_689683.2"/>
</dbReference>
<dbReference type="UCSC" id="uc002lcb.2">
    <molecule id="Q6ZSG1-1"/>
    <property type="organism name" value="human"/>
</dbReference>
<dbReference type="AGR" id="HGNC:31696"/>
<dbReference type="CTD" id="494470"/>
<dbReference type="DisGeNET" id="494470"/>
<dbReference type="GeneCards" id="ARK2C"/>
<dbReference type="HGNC" id="HGNC:31696">
    <property type="gene designation" value="ARK2C"/>
</dbReference>
<dbReference type="HPA" id="ENSG00000141622">
    <property type="expression patterns" value="Group enriched (brain, retina)"/>
</dbReference>
<dbReference type="neXtProt" id="NX_Q6ZSG1"/>
<dbReference type="OpenTargets" id="ENSG00000141622"/>
<dbReference type="PharmGKB" id="PA134972127"/>
<dbReference type="VEuPathDB" id="HostDB:ENSG00000141622"/>
<dbReference type="eggNOG" id="KOG0800">
    <property type="taxonomic scope" value="Eukaryota"/>
</dbReference>
<dbReference type="GeneTree" id="ENSGT00940000156997"/>
<dbReference type="HOGENOM" id="CLU_056012_0_0_1"/>
<dbReference type="InParanoid" id="Q6ZSG1"/>
<dbReference type="OMA" id="HFTRHHN"/>
<dbReference type="OrthoDB" id="8062037at2759"/>
<dbReference type="PAN-GO" id="Q6ZSG1">
    <property type="GO annotations" value="4 GO annotations based on evolutionary models"/>
</dbReference>
<dbReference type="PhylomeDB" id="Q6ZSG1"/>
<dbReference type="TreeFam" id="TF317681"/>
<dbReference type="PathwayCommons" id="Q6ZSG1"/>
<dbReference type="SignaLink" id="Q6ZSG1"/>
<dbReference type="SIGNOR" id="Q6ZSG1"/>
<dbReference type="BioGRID-ORCS" id="494470">
    <property type="hits" value="9 hits in 1184 CRISPR screens"/>
</dbReference>
<dbReference type="ChiTaRS" id="RNF165">
    <property type="organism name" value="human"/>
</dbReference>
<dbReference type="EvolutionaryTrace" id="Q6ZSG1"/>
<dbReference type="GenomeRNAi" id="494470"/>
<dbReference type="Pharos" id="Q6ZSG1">
    <property type="development level" value="Tdark"/>
</dbReference>
<dbReference type="PRO" id="PR:Q6ZSG1"/>
<dbReference type="Proteomes" id="UP000005640">
    <property type="component" value="Chromosome 18"/>
</dbReference>
<dbReference type="RNAct" id="Q6ZSG1">
    <property type="molecule type" value="protein"/>
</dbReference>
<dbReference type="Bgee" id="ENSG00000141622">
    <property type="expression patterns" value="Expressed in cortical plate and 135 other cell types or tissues"/>
</dbReference>
<dbReference type="ExpressionAtlas" id="Q6ZSG1">
    <property type="expression patterns" value="baseline and differential"/>
</dbReference>
<dbReference type="GO" id="GO:0005634">
    <property type="term" value="C:nucleus"/>
    <property type="evidence" value="ECO:0000318"/>
    <property type="project" value="GO_Central"/>
</dbReference>
<dbReference type="GO" id="GO:0032991">
    <property type="term" value="C:protein-containing complex"/>
    <property type="evidence" value="ECO:0007669"/>
    <property type="project" value="Ensembl"/>
</dbReference>
<dbReference type="GO" id="GO:0061630">
    <property type="term" value="F:ubiquitin protein ligase activity"/>
    <property type="evidence" value="ECO:0000318"/>
    <property type="project" value="GO_Central"/>
</dbReference>
<dbReference type="GO" id="GO:0008270">
    <property type="term" value="F:zinc ion binding"/>
    <property type="evidence" value="ECO:0007669"/>
    <property type="project" value="UniProtKB-KW"/>
</dbReference>
<dbReference type="GO" id="GO:0035136">
    <property type="term" value="P:forelimb morphogenesis"/>
    <property type="evidence" value="ECO:0007669"/>
    <property type="project" value="Ensembl"/>
</dbReference>
<dbReference type="GO" id="GO:0060384">
    <property type="term" value="P:innervation"/>
    <property type="evidence" value="ECO:0007669"/>
    <property type="project" value="Ensembl"/>
</dbReference>
<dbReference type="GO" id="GO:0008045">
    <property type="term" value="P:motor neuron axon guidance"/>
    <property type="evidence" value="ECO:0000318"/>
    <property type="project" value="GO_Central"/>
</dbReference>
<dbReference type="GO" id="GO:0061061">
    <property type="term" value="P:muscle structure development"/>
    <property type="evidence" value="ECO:0007669"/>
    <property type="project" value="Ensembl"/>
</dbReference>
<dbReference type="GO" id="GO:0030513">
    <property type="term" value="P:positive regulation of BMP signaling pathway"/>
    <property type="evidence" value="ECO:0000318"/>
    <property type="project" value="GO_Central"/>
</dbReference>
<dbReference type="GO" id="GO:0030163">
    <property type="term" value="P:protein catabolic process"/>
    <property type="evidence" value="ECO:0007669"/>
    <property type="project" value="Ensembl"/>
</dbReference>
<dbReference type="GO" id="GO:0000209">
    <property type="term" value="P:protein polyubiquitination"/>
    <property type="evidence" value="ECO:0007669"/>
    <property type="project" value="Ensembl"/>
</dbReference>
<dbReference type="CDD" id="cd16682">
    <property type="entry name" value="RING-H2_RNF165"/>
    <property type="match status" value="1"/>
</dbReference>
<dbReference type="FunFam" id="3.30.40.10:FF:000058">
    <property type="entry name" value="E3 ubiquitin-protein ligase Arkadia isoform X4"/>
    <property type="match status" value="1"/>
</dbReference>
<dbReference type="Gene3D" id="3.30.40.10">
    <property type="entry name" value="Zinc/RING finger domain, C3HC4 (zinc finger)"/>
    <property type="match status" value="1"/>
</dbReference>
<dbReference type="InterPro" id="IPR045191">
    <property type="entry name" value="MBR1/2-like"/>
</dbReference>
<dbReference type="InterPro" id="IPR001841">
    <property type="entry name" value="Znf_RING"/>
</dbReference>
<dbReference type="InterPro" id="IPR011016">
    <property type="entry name" value="Znf_RING-CH"/>
</dbReference>
<dbReference type="InterPro" id="IPR013083">
    <property type="entry name" value="Znf_RING/FYVE/PHD"/>
</dbReference>
<dbReference type="PANTHER" id="PTHR22937:SF65">
    <property type="entry name" value="E3 UBIQUITIN-PROTEIN LIGASE ARK2C"/>
    <property type="match status" value="1"/>
</dbReference>
<dbReference type="PANTHER" id="PTHR22937">
    <property type="entry name" value="E3 UBIQUITIN-PROTEIN LIGASE RNF165"/>
    <property type="match status" value="1"/>
</dbReference>
<dbReference type="Pfam" id="PF13639">
    <property type="entry name" value="zf-RING_2"/>
    <property type="match status" value="1"/>
</dbReference>
<dbReference type="SMART" id="SM00184">
    <property type="entry name" value="RING"/>
    <property type="match status" value="1"/>
</dbReference>
<dbReference type="SMART" id="SM00744">
    <property type="entry name" value="RINGv"/>
    <property type="match status" value="1"/>
</dbReference>
<dbReference type="SUPFAM" id="SSF57850">
    <property type="entry name" value="RING/U-box"/>
    <property type="match status" value="1"/>
</dbReference>
<dbReference type="PROSITE" id="PS50089">
    <property type="entry name" value="ZF_RING_2"/>
    <property type="match status" value="1"/>
</dbReference>
<name>ARK2C_HUMAN</name>
<protein>
    <recommendedName>
        <fullName evidence="6">E3 ubiquitin-protein ligase ARK2C</fullName>
        <ecNumber evidence="4">2.3.2.27</ecNumber>
    </recommendedName>
    <alternativeName>
        <fullName>RING finger protein 165</fullName>
        <shortName>RNF165</shortName>
    </alternativeName>
</protein>
<accession>Q6ZSG1</accession>
<accession>B3KVD1</accession>